<organism>
    <name type="scientific">Xenopus laevis</name>
    <name type="common">African clawed frog</name>
    <dbReference type="NCBI Taxonomy" id="8355"/>
    <lineage>
        <taxon>Eukaryota</taxon>
        <taxon>Metazoa</taxon>
        <taxon>Chordata</taxon>
        <taxon>Craniata</taxon>
        <taxon>Vertebrata</taxon>
        <taxon>Euteleostomi</taxon>
        <taxon>Amphibia</taxon>
        <taxon>Batrachia</taxon>
        <taxon>Anura</taxon>
        <taxon>Pipoidea</taxon>
        <taxon>Pipidae</taxon>
        <taxon>Xenopodinae</taxon>
        <taxon>Xenopus</taxon>
        <taxon>Xenopus</taxon>
    </lineage>
</organism>
<keyword id="KW-0131">Cell cycle</keyword>
<keyword id="KW-0132">Cell division</keyword>
<keyword id="KW-0378">Hydrolase</keyword>
<keyword id="KW-0479">Metal-binding</keyword>
<keyword id="KW-0498">Mitosis</keyword>
<keyword id="KW-0539">Nucleus</keyword>
<keyword id="KW-0645">Protease</keyword>
<keyword id="KW-1185">Reference proteome</keyword>
<keyword id="KW-0788">Thiol protease</keyword>
<keyword id="KW-0833">Ubl conjugation pathway</keyword>
<keyword id="KW-0862">Zinc</keyword>
<keyword id="KW-0863">Zinc-finger</keyword>
<protein>
    <recommendedName>
        <fullName>Ubiquitin carboxyl-terminal hydrolase 44-B</fullName>
        <ecNumber>3.4.19.12</ecNumber>
    </recommendedName>
    <alternativeName>
        <fullName>Deubiquitinating enzyme 44-B</fullName>
    </alternativeName>
    <alternativeName>
        <fullName>Ubiquitin thioesterase 44-B</fullName>
    </alternativeName>
    <alternativeName>
        <fullName>Ubiquitin-specific-processing protease 44-B</fullName>
    </alternativeName>
</protein>
<comment type="function">
    <text evidence="1">Deubiquitinase that plays a key role in the spindle checkpoint by preventing premature anaphase onset. Acts by specifically mediating deubiquitination of cdc20, a negative regulator of the anaphase promoting complex/cyclosome (APC/C) (By similarity).</text>
</comment>
<comment type="catalytic activity">
    <reaction>
        <text>Thiol-dependent hydrolysis of ester, thioester, amide, peptide and isopeptide bonds formed by the C-terminal Gly of ubiquitin (a 76-residue protein attached to proteins as an intracellular targeting signal).</text>
        <dbReference type="EC" id="3.4.19.12"/>
    </reaction>
</comment>
<comment type="subcellular location">
    <subcellularLocation>
        <location evidence="1">Nucleus</location>
    </subcellularLocation>
</comment>
<comment type="similarity">
    <text evidence="6">Belongs to the peptidase C19 family. USP44 subfamily.</text>
</comment>
<reference key="1">
    <citation type="submission" date="2004-10" db="EMBL/GenBank/DDBJ databases">
        <authorList>
            <consortium name="NIH - Xenopus Gene Collection (XGC) project"/>
        </authorList>
    </citation>
    <scope>NUCLEOTIDE SEQUENCE [LARGE SCALE MRNA]</scope>
    <source>
        <tissue>Ovary</tissue>
    </source>
</reference>
<dbReference type="EC" id="3.4.19.12"/>
<dbReference type="EMBL" id="BC084285">
    <property type="protein sequence ID" value="AAH84285.1"/>
    <property type="molecule type" value="mRNA"/>
</dbReference>
<dbReference type="RefSeq" id="NP_001088277.1">
    <property type="nucleotide sequence ID" value="NM_001094808.1"/>
</dbReference>
<dbReference type="DNASU" id="495110"/>
<dbReference type="GeneID" id="495110"/>
<dbReference type="KEGG" id="xla:495110"/>
<dbReference type="AGR" id="Xenbase:XB-GENE-6254317"/>
<dbReference type="CTD" id="495110"/>
<dbReference type="Xenbase" id="XB-GENE-6254317">
    <property type="gene designation" value="usp44.S"/>
</dbReference>
<dbReference type="OrthoDB" id="21192at2759"/>
<dbReference type="Proteomes" id="UP000186698">
    <property type="component" value="Chromosome 3S"/>
</dbReference>
<dbReference type="Bgee" id="495110">
    <property type="expression patterns" value="Expressed in egg cell and 19 other cell types or tissues"/>
</dbReference>
<dbReference type="GO" id="GO:0005737">
    <property type="term" value="C:cytoplasm"/>
    <property type="evidence" value="ECO:0000318"/>
    <property type="project" value="GO_Central"/>
</dbReference>
<dbReference type="GO" id="GO:0005634">
    <property type="term" value="C:nucleus"/>
    <property type="evidence" value="ECO:0000250"/>
    <property type="project" value="UniProtKB"/>
</dbReference>
<dbReference type="GO" id="GO:0004843">
    <property type="term" value="F:cysteine-type deubiquitinase activity"/>
    <property type="evidence" value="ECO:0000250"/>
    <property type="project" value="UniProtKB"/>
</dbReference>
<dbReference type="GO" id="GO:0008270">
    <property type="term" value="F:zinc ion binding"/>
    <property type="evidence" value="ECO:0007669"/>
    <property type="project" value="UniProtKB-KW"/>
</dbReference>
<dbReference type="GO" id="GO:0051301">
    <property type="term" value="P:cell division"/>
    <property type="evidence" value="ECO:0007669"/>
    <property type="project" value="UniProtKB-KW"/>
</dbReference>
<dbReference type="GO" id="GO:1904667">
    <property type="term" value="P:negative regulation of ubiquitin protein ligase activity"/>
    <property type="evidence" value="ECO:0000250"/>
    <property type="project" value="UniProtKB"/>
</dbReference>
<dbReference type="GO" id="GO:0016579">
    <property type="term" value="P:protein deubiquitination"/>
    <property type="evidence" value="ECO:0000250"/>
    <property type="project" value="UniProtKB"/>
</dbReference>
<dbReference type="GO" id="GO:0006508">
    <property type="term" value="P:proteolysis"/>
    <property type="evidence" value="ECO:0007669"/>
    <property type="project" value="UniProtKB-KW"/>
</dbReference>
<dbReference type="GO" id="GO:0010564">
    <property type="term" value="P:regulation of cell cycle process"/>
    <property type="evidence" value="ECO:0000318"/>
    <property type="project" value="GO_Central"/>
</dbReference>
<dbReference type="FunFam" id="3.30.40.10:FF:000067">
    <property type="entry name" value="Ubiquitinyl hydrolase 1"/>
    <property type="match status" value="1"/>
</dbReference>
<dbReference type="Gene3D" id="3.90.70.10">
    <property type="entry name" value="Cysteine proteinases"/>
    <property type="match status" value="1"/>
</dbReference>
<dbReference type="Gene3D" id="3.30.40.10">
    <property type="entry name" value="Zinc/RING finger domain, C3HC4 (zinc finger)"/>
    <property type="match status" value="1"/>
</dbReference>
<dbReference type="InterPro" id="IPR038765">
    <property type="entry name" value="Papain-like_cys_pep_sf"/>
</dbReference>
<dbReference type="InterPro" id="IPR001394">
    <property type="entry name" value="Peptidase_C19_UCH"/>
</dbReference>
<dbReference type="InterPro" id="IPR050185">
    <property type="entry name" value="Ub_carboxyl-term_hydrolase"/>
</dbReference>
<dbReference type="InterPro" id="IPR018200">
    <property type="entry name" value="USP_CS"/>
</dbReference>
<dbReference type="InterPro" id="IPR028889">
    <property type="entry name" value="USP_dom"/>
</dbReference>
<dbReference type="InterPro" id="IPR013083">
    <property type="entry name" value="Znf_RING/FYVE/PHD"/>
</dbReference>
<dbReference type="InterPro" id="IPR001607">
    <property type="entry name" value="Znf_UBP"/>
</dbReference>
<dbReference type="PANTHER" id="PTHR21646">
    <property type="entry name" value="UBIQUITIN CARBOXYL-TERMINAL HYDROLASE"/>
    <property type="match status" value="1"/>
</dbReference>
<dbReference type="PANTHER" id="PTHR21646:SF15">
    <property type="entry name" value="UBIQUITIN CARBOXYL-TERMINAL HYDROLASE 44"/>
    <property type="match status" value="1"/>
</dbReference>
<dbReference type="Pfam" id="PF00443">
    <property type="entry name" value="UCH"/>
    <property type="match status" value="1"/>
</dbReference>
<dbReference type="Pfam" id="PF02148">
    <property type="entry name" value="zf-UBP"/>
    <property type="match status" value="1"/>
</dbReference>
<dbReference type="SMART" id="SM00290">
    <property type="entry name" value="ZnF_UBP"/>
    <property type="match status" value="1"/>
</dbReference>
<dbReference type="SUPFAM" id="SSF54001">
    <property type="entry name" value="Cysteine proteinases"/>
    <property type="match status" value="1"/>
</dbReference>
<dbReference type="SUPFAM" id="SSF57850">
    <property type="entry name" value="RING/U-box"/>
    <property type="match status" value="1"/>
</dbReference>
<dbReference type="PROSITE" id="PS00972">
    <property type="entry name" value="USP_1"/>
    <property type="match status" value="1"/>
</dbReference>
<dbReference type="PROSITE" id="PS00973">
    <property type="entry name" value="USP_2"/>
    <property type="match status" value="1"/>
</dbReference>
<dbReference type="PROSITE" id="PS50235">
    <property type="entry name" value="USP_3"/>
    <property type="match status" value="1"/>
</dbReference>
<dbReference type="PROSITE" id="PS50271">
    <property type="entry name" value="ZF_UBP"/>
    <property type="match status" value="1"/>
</dbReference>
<sequence>MDKCKHVGRLRLAQDHSILNPQKWHCVDCNTTESVWACLSCSHVACGRYIEEHALRHFQDSKHPLALEVNELYVFCYLCDDYVLNDNTTGDLKLLRSTLSAIKSQNYDCTTRSGRTLRSMVSADDSFISHEGAQAFLQNEDRAFTALWHRRHALLGKVFRSWFALTPKGKQRLEEERLREEAEHKREEARKRRQQLKHKLKEEMESTPPRKSSRLQQQIQPSPKIESSSVQKMNQKNAPSTKQNPPAPTSDKARLKKIGNSPIKRKPTVTPGVTGLRNLGNTCYMNSILQILSHLHVFRECFLQLDLNQTQELLAADGSGKTRLSSKYPPGAELPRVTQKHTKGQRSLARRPSFSLGLSGGASNSRNMELIQPKEPSSKHISLCHELHTLFQVMWSGKWALVSPFAMLHSVWRLIPAFHGYAQQDAQEFLCELLDKVQQELETTGTRYPALIPTSQRKLIRQVLNVVNNIFHGQLLSQVTCLVCDHKSNTIEPFWDLSLEFPERYHFSGKATASQRPCLLTEMLAKFTETEALEGKIYACDQCNKAQKQLMVCRLPQVLRLHLKRFRWSGRNHREKIGVHVRFDQMLNMEPYCCRESTAALRADCFIYDLSSVVMHHGKGFGSGHYTAFCYNPEGGFWVHCNDSKLHSCAVEEVCKAQAYILFYTQRVTQENGHLSERLPLHDSPQSPPP</sequence>
<feature type="chain" id="PRO_0000395814" description="Ubiquitin carboxyl-terminal hydrolase 44-B">
    <location>
        <begin position="1"/>
        <end position="690"/>
    </location>
</feature>
<feature type="domain" description="USP">
    <location>
        <begin position="274"/>
        <end position="667"/>
    </location>
</feature>
<feature type="zinc finger region" description="UBP-type" evidence="2">
    <location>
        <begin position="2"/>
        <end position="99"/>
    </location>
</feature>
<feature type="region of interest" description="Disordered" evidence="5">
    <location>
        <begin position="173"/>
        <end position="272"/>
    </location>
</feature>
<feature type="region of interest" description="Disordered" evidence="5">
    <location>
        <begin position="319"/>
        <end position="366"/>
    </location>
</feature>
<feature type="compositionally biased region" description="Basic and acidic residues" evidence="5">
    <location>
        <begin position="173"/>
        <end position="190"/>
    </location>
</feature>
<feature type="compositionally biased region" description="Polar residues" evidence="5">
    <location>
        <begin position="214"/>
        <end position="244"/>
    </location>
</feature>
<feature type="active site" description="Nucleophile" evidence="3 4">
    <location>
        <position position="283"/>
    </location>
</feature>
<feature type="active site" description="Proton acceptor" evidence="3 4">
    <location>
        <position position="625"/>
    </location>
</feature>
<feature type="binding site" evidence="2">
    <location>
        <position position="4"/>
    </location>
    <ligand>
        <name>Zn(2+)</name>
        <dbReference type="ChEBI" id="CHEBI:29105"/>
        <label>1</label>
    </ligand>
</feature>
<feature type="binding site" evidence="2">
    <location>
        <position position="6"/>
    </location>
    <ligand>
        <name>Zn(2+)</name>
        <dbReference type="ChEBI" id="CHEBI:29105"/>
        <label>1</label>
    </ligand>
</feature>
<feature type="binding site" evidence="2">
    <location>
        <position position="26"/>
    </location>
    <ligand>
        <name>Zn(2+)</name>
        <dbReference type="ChEBI" id="CHEBI:29105"/>
        <label>2</label>
    </ligand>
</feature>
<feature type="binding site" evidence="2">
    <location>
        <position position="29"/>
    </location>
    <ligand>
        <name>Zn(2+)</name>
        <dbReference type="ChEBI" id="CHEBI:29105"/>
        <label>2</label>
    </ligand>
</feature>
<feature type="binding site" evidence="2">
    <location>
        <position position="38"/>
    </location>
    <ligand>
        <name>Zn(2+)</name>
        <dbReference type="ChEBI" id="CHEBI:29105"/>
        <label>3</label>
    </ligand>
</feature>
<feature type="binding site" evidence="2">
    <location>
        <position position="41"/>
    </location>
    <ligand>
        <name>Zn(2+)</name>
        <dbReference type="ChEBI" id="CHEBI:29105"/>
        <label>3</label>
    </ligand>
</feature>
<feature type="binding site" evidence="2">
    <location>
        <position position="46"/>
    </location>
    <ligand>
        <name>Zn(2+)</name>
        <dbReference type="ChEBI" id="CHEBI:29105"/>
        <label>2</label>
    </ligand>
</feature>
<feature type="binding site" evidence="2">
    <location>
        <position position="53"/>
    </location>
    <ligand>
        <name>Zn(2+)</name>
        <dbReference type="ChEBI" id="CHEBI:29105"/>
        <label>2</label>
    </ligand>
</feature>
<feature type="binding site" evidence="2">
    <location>
        <position position="57"/>
    </location>
    <ligand>
        <name>Zn(2+)</name>
        <dbReference type="ChEBI" id="CHEBI:29105"/>
        <label>3</label>
    </ligand>
</feature>
<feature type="binding site" evidence="2">
    <location>
        <position position="63"/>
    </location>
    <ligand>
        <name>Zn(2+)</name>
        <dbReference type="ChEBI" id="CHEBI:29105"/>
        <label>3</label>
    </ligand>
</feature>
<feature type="binding site" evidence="2">
    <location>
        <position position="76"/>
    </location>
    <ligand>
        <name>Zn(2+)</name>
        <dbReference type="ChEBI" id="CHEBI:29105"/>
        <label>1</label>
    </ligand>
</feature>
<feature type="binding site" evidence="2">
    <location>
        <position position="79"/>
    </location>
    <ligand>
        <name>Zn(2+)</name>
        <dbReference type="ChEBI" id="CHEBI:29105"/>
        <label>1</label>
    </ligand>
</feature>
<evidence type="ECO:0000250" key="1"/>
<evidence type="ECO:0000255" key="2">
    <source>
        <dbReference type="PROSITE-ProRule" id="PRU00502"/>
    </source>
</evidence>
<evidence type="ECO:0000255" key="3">
    <source>
        <dbReference type="PROSITE-ProRule" id="PRU10092"/>
    </source>
</evidence>
<evidence type="ECO:0000255" key="4">
    <source>
        <dbReference type="PROSITE-ProRule" id="PRU10093"/>
    </source>
</evidence>
<evidence type="ECO:0000256" key="5">
    <source>
        <dbReference type="SAM" id="MobiDB-lite"/>
    </source>
</evidence>
<evidence type="ECO:0000305" key="6"/>
<proteinExistence type="evidence at transcript level"/>
<gene>
    <name type="primary">usp44-b</name>
</gene>
<name>UP44B_XENLA</name>
<accession>Q5XGZ2</accession>